<name>RUVA_BURMS</name>
<keyword id="KW-0963">Cytoplasm</keyword>
<keyword id="KW-0227">DNA damage</keyword>
<keyword id="KW-0233">DNA recombination</keyword>
<keyword id="KW-0234">DNA repair</keyword>
<keyword id="KW-0238">DNA-binding</keyword>
<sequence>MIGRIAGTLLEKNPPHILVDCNGVGYEVDVPMSTFYNLPHTGEKVVLLTQLIVREDAHLLYGFLTPPERSTFRELLKITGVGARMALAVLSGMSVAELSQAVTLQDAARLTRVPGIGKKTAERLLLELKGKLGADLGPLAGAASPSDHATDILNALVALGYSEKEALAAIKNVPAGTGVSEGIKLSLKALSKA</sequence>
<evidence type="ECO:0000255" key="1">
    <source>
        <dbReference type="HAMAP-Rule" id="MF_00031"/>
    </source>
</evidence>
<protein>
    <recommendedName>
        <fullName evidence="1">Holliday junction branch migration complex subunit RuvA</fullName>
    </recommendedName>
</protein>
<organism>
    <name type="scientific">Burkholderia mallei (strain SAVP1)</name>
    <dbReference type="NCBI Taxonomy" id="320388"/>
    <lineage>
        <taxon>Bacteria</taxon>
        <taxon>Pseudomonadati</taxon>
        <taxon>Pseudomonadota</taxon>
        <taxon>Betaproteobacteria</taxon>
        <taxon>Burkholderiales</taxon>
        <taxon>Burkholderiaceae</taxon>
        <taxon>Burkholderia</taxon>
        <taxon>pseudomallei group</taxon>
    </lineage>
</organism>
<accession>A1V065</accession>
<comment type="function">
    <text evidence="1">The RuvA-RuvB-RuvC complex processes Holliday junction (HJ) DNA during genetic recombination and DNA repair, while the RuvA-RuvB complex plays an important role in the rescue of blocked DNA replication forks via replication fork reversal (RFR). RuvA specifically binds to HJ cruciform DNA, conferring on it an open structure. The RuvB hexamer acts as an ATP-dependent pump, pulling dsDNA into and through the RuvAB complex. HJ branch migration allows RuvC to scan DNA until it finds its consensus sequence, where it cleaves and resolves the cruciform DNA.</text>
</comment>
<comment type="subunit">
    <text evidence="1">Homotetramer. Forms an RuvA(8)-RuvB(12)-Holliday junction (HJ) complex. HJ DNA is sandwiched between 2 RuvA tetramers; dsDNA enters through RuvA and exits via RuvB. An RuvB hexamer assembles on each DNA strand where it exits the tetramer. Each RuvB hexamer is contacted by two RuvA subunits (via domain III) on 2 adjacent RuvB subunits; this complex drives branch migration. In the full resolvosome a probable DNA-RuvA(4)-RuvB(12)-RuvC(2) complex forms which resolves the HJ.</text>
</comment>
<comment type="subcellular location">
    <subcellularLocation>
        <location evidence="1">Cytoplasm</location>
    </subcellularLocation>
</comment>
<comment type="domain">
    <text evidence="1">Has three domains with a flexible linker between the domains II and III and assumes an 'L' shape. Domain III is highly mobile and contacts RuvB.</text>
</comment>
<comment type="similarity">
    <text evidence="1">Belongs to the RuvA family.</text>
</comment>
<dbReference type="EMBL" id="CP000526">
    <property type="protein sequence ID" value="ABM52039.1"/>
    <property type="molecule type" value="Genomic_DNA"/>
</dbReference>
<dbReference type="RefSeq" id="WP_004194029.1">
    <property type="nucleotide sequence ID" value="NC_008785.1"/>
</dbReference>
<dbReference type="SMR" id="A1V065"/>
<dbReference type="GeneID" id="93061493"/>
<dbReference type="KEGG" id="bmv:BMASAVP1_A0267"/>
<dbReference type="HOGENOM" id="CLU_087936_0_0_4"/>
<dbReference type="GO" id="GO:0005737">
    <property type="term" value="C:cytoplasm"/>
    <property type="evidence" value="ECO:0007669"/>
    <property type="project" value="UniProtKB-SubCell"/>
</dbReference>
<dbReference type="GO" id="GO:0009379">
    <property type="term" value="C:Holliday junction helicase complex"/>
    <property type="evidence" value="ECO:0007669"/>
    <property type="project" value="InterPro"/>
</dbReference>
<dbReference type="GO" id="GO:0048476">
    <property type="term" value="C:Holliday junction resolvase complex"/>
    <property type="evidence" value="ECO:0007669"/>
    <property type="project" value="UniProtKB-UniRule"/>
</dbReference>
<dbReference type="GO" id="GO:0005524">
    <property type="term" value="F:ATP binding"/>
    <property type="evidence" value="ECO:0007669"/>
    <property type="project" value="InterPro"/>
</dbReference>
<dbReference type="GO" id="GO:0000400">
    <property type="term" value="F:four-way junction DNA binding"/>
    <property type="evidence" value="ECO:0007669"/>
    <property type="project" value="UniProtKB-UniRule"/>
</dbReference>
<dbReference type="GO" id="GO:0009378">
    <property type="term" value="F:four-way junction helicase activity"/>
    <property type="evidence" value="ECO:0007669"/>
    <property type="project" value="InterPro"/>
</dbReference>
<dbReference type="GO" id="GO:0006310">
    <property type="term" value="P:DNA recombination"/>
    <property type="evidence" value="ECO:0007669"/>
    <property type="project" value="UniProtKB-UniRule"/>
</dbReference>
<dbReference type="GO" id="GO:0006281">
    <property type="term" value="P:DNA repair"/>
    <property type="evidence" value="ECO:0007669"/>
    <property type="project" value="UniProtKB-UniRule"/>
</dbReference>
<dbReference type="CDD" id="cd14332">
    <property type="entry name" value="UBA_RuvA_C"/>
    <property type="match status" value="1"/>
</dbReference>
<dbReference type="Gene3D" id="1.10.150.20">
    <property type="entry name" value="5' to 3' exonuclease, C-terminal subdomain"/>
    <property type="match status" value="1"/>
</dbReference>
<dbReference type="Gene3D" id="1.10.8.10">
    <property type="entry name" value="DNA helicase RuvA subunit, C-terminal domain"/>
    <property type="match status" value="1"/>
</dbReference>
<dbReference type="Gene3D" id="2.40.50.140">
    <property type="entry name" value="Nucleic acid-binding proteins"/>
    <property type="match status" value="1"/>
</dbReference>
<dbReference type="HAMAP" id="MF_00031">
    <property type="entry name" value="DNA_HJ_migration_RuvA"/>
    <property type="match status" value="1"/>
</dbReference>
<dbReference type="InterPro" id="IPR013849">
    <property type="entry name" value="DNA_helicase_Holl-junc_RuvA_I"/>
</dbReference>
<dbReference type="InterPro" id="IPR003583">
    <property type="entry name" value="Hlx-hairpin-Hlx_DNA-bd_motif"/>
</dbReference>
<dbReference type="InterPro" id="IPR012340">
    <property type="entry name" value="NA-bd_OB-fold"/>
</dbReference>
<dbReference type="InterPro" id="IPR000085">
    <property type="entry name" value="RuvA"/>
</dbReference>
<dbReference type="InterPro" id="IPR010994">
    <property type="entry name" value="RuvA_2-like"/>
</dbReference>
<dbReference type="InterPro" id="IPR011114">
    <property type="entry name" value="RuvA_C"/>
</dbReference>
<dbReference type="InterPro" id="IPR036267">
    <property type="entry name" value="RuvA_C_sf"/>
</dbReference>
<dbReference type="NCBIfam" id="TIGR00084">
    <property type="entry name" value="ruvA"/>
    <property type="match status" value="1"/>
</dbReference>
<dbReference type="Pfam" id="PF14520">
    <property type="entry name" value="HHH_5"/>
    <property type="match status" value="1"/>
</dbReference>
<dbReference type="Pfam" id="PF07499">
    <property type="entry name" value="RuvA_C"/>
    <property type="match status" value="1"/>
</dbReference>
<dbReference type="Pfam" id="PF01330">
    <property type="entry name" value="RuvA_N"/>
    <property type="match status" value="1"/>
</dbReference>
<dbReference type="SMART" id="SM00278">
    <property type="entry name" value="HhH1"/>
    <property type="match status" value="2"/>
</dbReference>
<dbReference type="SUPFAM" id="SSF46929">
    <property type="entry name" value="DNA helicase RuvA subunit, C-terminal domain"/>
    <property type="match status" value="1"/>
</dbReference>
<dbReference type="SUPFAM" id="SSF50249">
    <property type="entry name" value="Nucleic acid-binding proteins"/>
    <property type="match status" value="1"/>
</dbReference>
<dbReference type="SUPFAM" id="SSF47781">
    <property type="entry name" value="RuvA domain 2-like"/>
    <property type="match status" value="1"/>
</dbReference>
<feature type="chain" id="PRO_1000002413" description="Holliday junction branch migration complex subunit RuvA">
    <location>
        <begin position="1"/>
        <end position="193"/>
    </location>
</feature>
<feature type="region of interest" description="Domain I" evidence="1">
    <location>
        <begin position="1"/>
        <end position="64"/>
    </location>
</feature>
<feature type="region of interest" description="Domain II" evidence="1">
    <location>
        <begin position="65"/>
        <end position="139"/>
    </location>
</feature>
<feature type="region of interest" description="Flexible linker" evidence="1">
    <location>
        <begin position="139"/>
        <end position="143"/>
    </location>
</feature>
<feature type="region of interest" description="Domain III" evidence="1">
    <location>
        <begin position="144"/>
        <end position="193"/>
    </location>
</feature>
<proteinExistence type="inferred from homology"/>
<gene>
    <name evidence="1" type="primary">ruvA</name>
    <name type="ordered locus">BMASAVP1_A0267</name>
</gene>
<reference key="1">
    <citation type="journal article" date="2010" name="Genome Biol. Evol.">
        <title>Continuing evolution of Burkholderia mallei through genome reduction and large-scale rearrangements.</title>
        <authorList>
            <person name="Losada L."/>
            <person name="Ronning C.M."/>
            <person name="DeShazer D."/>
            <person name="Woods D."/>
            <person name="Fedorova N."/>
            <person name="Kim H.S."/>
            <person name="Shabalina S.A."/>
            <person name="Pearson T.R."/>
            <person name="Brinkac L."/>
            <person name="Tan P."/>
            <person name="Nandi T."/>
            <person name="Crabtree J."/>
            <person name="Badger J."/>
            <person name="Beckstrom-Sternberg S."/>
            <person name="Saqib M."/>
            <person name="Schutzer S.E."/>
            <person name="Keim P."/>
            <person name="Nierman W.C."/>
        </authorList>
    </citation>
    <scope>NUCLEOTIDE SEQUENCE [LARGE SCALE GENOMIC DNA]</scope>
    <source>
        <strain>SAVP1</strain>
    </source>
</reference>